<evidence type="ECO:0000250" key="1"/>
<evidence type="ECO:0000305" key="2"/>
<dbReference type="EMBL" id="X03395">
    <property type="protein sequence ID" value="CAA27130.1"/>
    <property type="status" value="ALT_INIT"/>
    <property type="molecule type" value="Genomic_DNA"/>
</dbReference>
<dbReference type="PIR" id="S09638">
    <property type="entry name" value="S09638"/>
</dbReference>
<dbReference type="SMR" id="P06177"/>
<dbReference type="GO" id="GO:0009288">
    <property type="term" value="C:bacterial-type flagellum"/>
    <property type="evidence" value="ECO:0007669"/>
    <property type="project" value="UniProtKB-SubCell"/>
</dbReference>
<dbReference type="GO" id="GO:0005576">
    <property type="term" value="C:extracellular region"/>
    <property type="evidence" value="ECO:0007669"/>
    <property type="project" value="UniProtKB-SubCell"/>
</dbReference>
<dbReference type="GO" id="GO:0005198">
    <property type="term" value="F:structural molecule activity"/>
    <property type="evidence" value="ECO:0007669"/>
    <property type="project" value="InterPro"/>
</dbReference>
<dbReference type="Gene3D" id="6.10.280.190">
    <property type="match status" value="1"/>
</dbReference>
<dbReference type="Gene3D" id="2.30.220.10">
    <property type="entry name" value="f41 fragment of flagellin, C-terminal domain"/>
    <property type="match status" value="1"/>
</dbReference>
<dbReference type="Gene3D" id="2.170.280.10">
    <property type="entry name" value="f41 fragment of flagellin, middle domain"/>
    <property type="match status" value="1"/>
</dbReference>
<dbReference type="Gene3D" id="1.20.1330.10">
    <property type="entry name" value="f41 fragment of flagellin, N-terminal domain"/>
    <property type="match status" value="1"/>
</dbReference>
<dbReference type="Gene3D" id="6.10.10.10">
    <property type="entry name" value="Flagellar export chaperone, C-terminal domain"/>
    <property type="match status" value="1"/>
</dbReference>
<dbReference type="InterPro" id="IPR001492">
    <property type="entry name" value="Flagellin"/>
</dbReference>
<dbReference type="InterPro" id="IPR046358">
    <property type="entry name" value="Flagellin_C"/>
</dbReference>
<dbReference type="InterPro" id="IPR042187">
    <property type="entry name" value="Flagellin_C_sub2"/>
</dbReference>
<dbReference type="InterPro" id="IPR014981">
    <property type="entry name" value="Flagellin_D3"/>
</dbReference>
<dbReference type="InterPro" id="IPR001029">
    <property type="entry name" value="Flagellin_N"/>
</dbReference>
<dbReference type="InterPro" id="IPR049365">
    <property type="entry name" value="FLIC_barrel"/>
</dbReference>
<dbReference type="NCBIfam" id="NF005953">
    <property type="entry name" value="PRK08026.1"/>
    <property type="match status" value="1"/>
</dbReference>
<dbReference type="PANTHER" id="PTHR42792">
    <property type="entry name" value="FLAGELLIN"/>
    <property type="match status" value="1"/>
</dbReference>
<dbReference type="PANTHER" id="PTHR42792:SF2">
    <property type="entry name" value="FLAGELLIN"/>
    <property type="match status" value="1"/>
</dbReference>
<dbReference type="Pfam" id="PF00700">
    <property type="entry name" value="Flagellin_C"/>
    <property type="match status" value="1"/>
</dbReference>
<dbReference type="Pfam" id="PF08884">
    <property type="entry name" value="Flagellin_D3"/>
    <property type="match status" value="1"/>
</dbReference>
<dbReference type="Pfam" id="PF00669">
    <property type="entry name" value="Flagellin_N"/>
    <property type="match status" value="1"/>
</dbReference>
<dbReference type="Pfam" id="PF21504">
    <property type="entry name" value="FLIC_barrel"/>
    <property type="match status" value="1"/>
</dbReference>
<dbReference type="PRINTS" id="PR00207">
    <property type="entry name" value="FLAGELLIN"/>
</dbReference>
<dbReference type="SUPFAM" id="SSF64518">
    <property type="entry name" value="Phase 1 flagellin"/>
    <property type="match status" value="1"/>
</dbReference>
<comment type="function">
    <text>Flagellin is the subunit protein which polymerizes to form the filaments of bacterial flagella.</text>
</comment>
<comment type="subcellular location">
    <subcellularLocation>
        <location>Secreted</location>
    </subcellularLocation>
    <subcellularLocation>
        <location>Bacterial flagellum</location>
    </subcellularLocation>
</comment>
<comment type="miscellaneous">
    <text>Individual Salmonella serotypes usually alternate between the production of 2 antigenic forms of flagella, termed phase 1 and phase 2, each specified by separate structural genes.</text>
</comment>
<comment type="similarity">
    <text evidence="2">Belongs to the bacterial flagellin family.</text>
</comment>
<comment type="sequence caution" evidence="2">
    <conflict type="erroneous initiation">
        <sequence resource="EMBL-CDS" id="CAA27130"/>
    </conflict>
</comment>
<gene>
    <name type="primary">fliC</name>
</gene>
<keyword id="KW-0975">Bacterial flagellum</keyword>
<keyword id="KW-0964">Secreted</keyword>
<sequence length="505" mass="53384">MAQVINTNSLSLLTQNNLNKSQSALGTAIERLSSGLRINSAKDDAAGQAIANRFTANIKGLTQASRNANDGISIAQTTEGALNEINNNLQRVRELAVQSANGTNSQSDLDSIQAEITQRLNEIDRVSGQTQFNGVKVLAQDNTLTIQVGANDGETIDIDLKEISSKTLGLDKLNVQDAYTPKETAVTVDKTTYKNGTDTITAQSNTDIQTAIGGGATGVTGADIKFKDGQYYLDVKGGASAGVYKATYDETTKKVNIDTTDKTPLATAEATAIRGTATITHNQIAEVTKEGVDTTTVAAQLAAAGVTGADKDNTSLVKLSFEDKNGKVIDGGYAVKMGDDFYAATYDEKQVQLLLNNHYTDGAGVLQTGAVKFGGANGKSEVVTATVGKTYLASDLDKHNFRTGGELKEVNTDKTENPLQKIDAALAQVDTLRSDLGAVQNRFNSAITNLGNTVNNLSSARSRIEDSDYATEVSNMSRAQILQQAGTSVLAQANQVPQNVLSLLR</sequence>
<accession>P06177</accession>
<feature type="initiator methionine" description="Removed" evidence="1">
    <location>
        <position position="1"/>
    </location>
</feature>
<feature type="chain" id="PRO_0000182570" description="Flagellin">
    <location>
        <begin position="2"/>
        <end position="505"/>
    </location>
</feature>
<proteinExistence type="inferred from homology"/>
<organism>
    <name type="scientific">Salmonella muenchen</name>
    <dbReference type="NCBI Taxonomy" id="596"/>
    <lineage>
        <taxon>Bacteria</taxon>
        <taxon>Pseudomonadati</taxon>
        <taxon>Pseudomonadota</taxon>
        <taxon>Gammaproteobacteria</taxon>
        <taxon>Enterobacterales</taxon>
        <taxon>Enterobacteriaceae</taxon>
        <taxon>Salmonella</taxon>
    </lineage>
</organism>
<reference key="1">
    <citation type="journal article" date="1985" name="J. Mol. Biol.">
        <title>Covalent structure of three phase-1 flagellar filament proteins of Salmonella.</title>
        <authorList>
            <person name="Wei L.-N."/>
            <person name="Joys T.M."/>
        </authorList>
    </citation>
    <scope>NUCLEOTIDE SEQUENCE [GENOMIC DNA]</scope>
    <source>
        <strain>ATCC 8388</strain>
    </source>
</reference>
<name>FLIC_SALMU</name>
<protein>
    <recommendedName>
        <fullName>Flagellin</fullName>
    </recommendedName>
    <alternativeName>
        <fullName>Phase 1-D flagellin</fullName>
    </alternativeName>
</protein>